<feature type="chain" id="PRO_0000456734" description="Transcription factor dibT">
    <location>
        <begin position="1"/>
        <end position="631"/>
    </location>
</feature>
<feature type="DNA-binding region" description="Zn(2)-C6 fungal-type" evidence="1">
    <location>
        <begin position="11"/>
        <end position="38"/>
    </location>
</feature>
<feature type="region of interest" description="Disordered" evidence="2">
    <location>
        <begin position="123"/>
        <end position="148"/>
    </location>
</feature>
<feature type="region of interest" description="Disordered" evidence="2">
    <location>
        <begin position="469"/>
        <end position="488"/>
    </location>
</feature>
<feature type="compositionally biased region" description="Low complexity" evidence="2">
    <location>
        <begin position="123"/>
        <end position="144"/>
    </location>
</feature>
<protein>
    <recommendedName>
        <fullName evidence="6">Transcription factor dibT</fullName>
    </recommendedName>
    <alternativeName>
        <fullName evidence="6">Dibenzodioxocinones biosynthesis cluster protein T</fullName>
    </alternativeName>
</protein>
<proteinExistence type="evidence at transcript level"/>
<comment type="function">
    <text evidence="3 4">Transcription factor; part of the gene cluster that mediates the biosynthesis of pestalotiollide B which is part of dibenzodioxocinones, a novel class of inhibitors against cholesterol ester transfer protein (CEPT) (PubMed:31474098, PubMed:35114496). Acts as the key transcription factor within the cluster and positively regulates the expression of the cluster genes and the subsequent production of dibenzodioxocinones such as pestalotiollide B, pestalotiollide C, 1',2'-dehydropenicillide, 3'-methoxy-1',2'-dehydropenicillide and 1',2'-epoxy-3',4'-didehydropenicillide (PubMed:35114496). Required for the expression of most PKS genes outside of the dibenzodioxocinones cluster, (43 out of 48 defined PKS genes), and promotes pigmentation of the mycelium and conidia (PubMed:35114496).</text>
</comment>
<comment type="subcellular location">
    <subcellularLocation>
        <location evidence="1">Nucleus</location>
    </subcellularLocation>
</comment>
<comment type="induction">
    <text evidence="4">The expression of the dibenzodioxocinones biosynthesis cluster is positively regulated by the transcription factor dibT.</text>
</comment>
<comment type="disruption phenotype">
    <text evidence="3 4">Completely abolishes the production of pestalotiollide B and significantly decreases the growth rate (PubMed:31474098). Reduces the expresssion of 43 of 48 PKS genes present in Pestalotiopsis microspora (PubMed:35114496).</text>
</comment>
<sequence length="631" mass="68810">MPPGRKQGAGCWTCRLRRKRCDSVQPVCGSCQSLEITCYSGEARPSWMDGGSDQKHMSESIKARIKHNAMLRRERRLMANEDHDIIMTMETDHRAPGELMNSGSALGASSSSRVSNPVLEYDSLADSSASTPSTSSGRPTTLRSSVDRFDEGQSPLTVASWASGPPTLSSGYSASSTRPAVPIQVQLGSAMIYLDYVFPFLFPFYQPSLIETGRQWLLGLLCQNDVSFHIASSLSAYFFSLVPQGDDQDMHDDCKALVWDKLIEQMDLAIGSIQSTVSAVSSSGARTPLLDKTRIMQEITQLLIVEVTVRNNVNWQIHLTPALSIFDEIFKSHGLDQSSKPSLNILSHALPSSIPVTTQHHKSLPNTADQSALTFFVSLLLFVDIMASASLGTSPTLQSYHESLLPSQSDQDFHISLEKVLGCQNWALVAIGNISALCAWKRDAKRGGNFSIFRLVSLAEPISQALERGLKDLDTSPPSPQPTKTSAGRLEAYYSRHDKAIDHKFTANITRIWAHAAIIYLSVSLSGWQTNNNEIRAAVAQVLALLEMIDSPGQLRSLSWPICIAGCLALPAQVPAFRRIVGTMGPLGKFGTLSNALSIMETVWNSRDSIDSNTWDIASALSIIGSPALLI</sequence>
<organism>
    <name type="scientific">Pestalotiopsis microspora</name>
    <dbReference type="NCBI Taxonomy" id="85828"/>
    <lineage>
        <taxon>Eukaryota</taxon>
        <taxon>Fungi</taxon>
        <taxon>Dikarya</taxon>
        <taxon>Ascomycota</taxon>
        <taxon>Pezizomycotina</taxon>
        <taxon>Sordariomycetes</taxon>
        <taxon>Xylariomycetidae</taxon>
        <taxon>Amphisphaeriales</taxon>
        <taxon>Sporocadaceae</taxon>
        <taxon>Pestalotiopsis</taxon>
    </lineage>
</organism>
<name>DIBT_PESMI</name>
<evidence type="ECO:0000255" key="1">
    <source>
        <dbReference type="PROSITE-ProRule" id="PRU00227"/>
    </source>
</evidence>
<evidence type="ECO:0000256" key="2">
    <source>
        <dbReference type="SAM" id="MobiDB-lite"/>
    </source>
</evidence>
<evidence type="ECO:0000269" key="3">
    <source>
    </source>
</evidence>
<evidence type="ECO:0000269" key="4">
    <source>
    </source>
</evidence>
<evidence type="ECO:0000303" key="5">
    <source>
    </source>
</evidence>
<evidence type="ECO:0000303" key="6">
    <source>
    </source>
</evidence>
<accession>A0A5B8YUW5</accession>
<keyword id="KW-0539">Nucleus</keyword>
<reference key="1">
    <citation type="journal article" date="2019" name="J. Microbiol. Biotechnol.">
        <title>A gene cluster for the biosynthesis of dibenzodioxocinons in the endophyte Pestalotiopsis microspora, a taxol producer.</title>
        <authorList>
            <person name="Liu Y."/>
            <person name="Chen L."/>
            <person name="Xie Q."/>
            <person name="Yu X."/>
            <person name="Duan A."/>
            <person name="Lin Y."/>
            <person name="Xiang B."/>
            <person name="Hao X."/>
            <person name="Chen W."/>
            <person name="Zhu X."/>
        </authorList>
    </citation>
    <scope>NUCLEOTIDE SEQUENCE [MRNA]</scope>
    <scope>FUNCTION</scope>
    <scope>DISRUPTION PHENOTYPE</scope>
    <source>
        <strain>NK17</strain>
    </source>
</reference>
<reference key="2">
    <citation type="journal article" date="2022" name="Microbiol. Res.">
        <title>Acquiring novel chemicals by overexpression of a transcription factor DibT in the dibenzodioxocinone biosynthetic cluster in Pestalotiopsis microspora.</title>
        <authorList>
            <person name="Liu Y."/>
            <person name="Fu Y."/>
            <person name="Zhou M."/>
            <person name="Hao X."/>
            <person name="Zhang P."/>
            <person name="Zhu X."/>
        </authorList>
    </citation>
    <scope>FUNCTION</scope>
    <scope>DISRUPTION PHENOTYPE</scope>
</reference>
<gene>
    <name evidence="6" type="primary">dibT</name>
    <name evidence="5" type="ORF">GME11360</name>
</gene>
<dbReference type="EMBL" id="MK590979">
    <property type="protein sequence ID" value="QED41491.1"/>
    <property type="molecule type" value="mRNA"/>
</dbReference>
<dbReference type="GO" id="GO:0005634">
    <property type="term" value="C:nucleus"/>
    <property type="evidence" value="ECO:0007669"/>
    <property type="project" value="UniProtKB-SubCell"/>
</dbReference>
<dbReference type="GO" id="GO:0000981">
    <property type="term" value="F:DNA-binding transcription factor activity, RNA polymerase II-specific"/>
    <property type="evidence" value="ECO:0007669"/>
    <property type="project" value="InterPro"/>
</dbReference>
<dbReference type="GO" id="GO:0008270">
    <property type="term" value="F:zinc ion binding"/>
    <property type="evidence" value="ECO:0007669"/>
    <property type="project" value="InterPro"/>
</dbReference>
<dbReference type="CDD" id="cd00067">
    <property type="entry name" value="GAL4"/>
    <property type="match status" value="1"/>
</dbReference>
<dbReference type="Gene3D" id="4.10.240.10">
    <property type="entry name" value="Zn(2)-C6 fungal-type DNA-binding domain"/>
    <property type="match status" value="1"/>
</dbReference>
<dbReference type="InterPro" id="IPR021858">
    <property type="entry name" value="Fun_TF"/>
</dbReference>
<dbReference type="InterPro" id="IPR036864">
    <property type="entry name" value="Zn2-C6_fun-type_DNA-bd_sf"/>
</dbReference>
<dbReference type="InterPro" id="IPR001138">
    <property type="entry name" value="Zn2Cys6_DnaBD"/>
</dbReference>
<dbReference type="PANTHER" id="PTHR37534:SF20">
    <property type="entry name" value="PRO1A C6 ZINK-FINGER PROTEIN"/>
    <property type="match status" value="1"/>
</dbReference>
<dbReference type="PANTHER" id="PTHR37534">
    <property type="entry name" value="TRANSCRIPTIONAL ACTIVATOR PROTEIN UGA3"/>
    <property type="match status" value="1"/>
</dbReference>
<dbReference type="Pfam" id="PF11951">
    <property type="entry name" value="Fungal_trans_2"/>
    <property type="match status" value="1"/>
</dbReference>
<dbReference type="Pfam" id="PF00172">
    <property type="entry name" value="Zn_clus"/>
    <property type="match status" value="1"/>
</dbReference>
<dbReference type="SMART" id="SM00066">
    <property type="entry name" value="GAL4"/>
    <property type="match status" value="1"/>
</dbReference>
<dbReference type="SUPFAM" id="SSF57701">
    <property type="entry name" value="Zn2/Cys6 DNA-binding domain"/>
    <property type="match status" value="1"/>
</dbReference>
<dbReference type="PROSITE" id="PS00463">
    <property type="entry name" value="ZN2_CY6_FUNGAL_1"/>
    <property type="match status" value="1"/>
</dbReference>
<dbReference type="PROSITE" id="PS50048">
    <property type="entry name" value="ZN2_CY6_FUNGAL_2"/>
    <property type="match status" value="1"/>
</dbReference>